<keyword id="KW-0002">3D-structure</keyword>
<keyword id="KW-0007">Acetylation</keyword>
<keyword id="KW-1072">Activation of host autophagy by virus</keyword>
<keyword id="KW-0067">ATP-binding</keyword>
<keyword id="KW-0167">Capsid protein</keyword>
<keyword id="KW-1165">Clathrin-mediated endocytosis of virus by host</keyword>
<keyword id="KW-0165">Cleavage on pair of basic residues</keyword>
<keyword id="KW-1015">Disulfide bond</keyword>
<keyword id="KW-1170">Fusion of virus membrane with host endosomal membrane</keyword>
<keyword id="KW-1168">Fusion of virus membrane with host membrane</keyword>
<keyword id="KW-0325">Glycoprotein</keyword>
<keyword id="KW-0342">GTP-binding</keyword>
<keyword id="KW-0347">Helicase</keyword>
<keyword id="KW-1035">Host cytoplasm</keyword>
<keyword id="KW-1038">Host endoplasmic reticulum</keyword>
<keyword id="KW-1043">Host membrane</keyword>
<keyword id="KW-1048">Host nucleus</keyword>
<keyword id="KW-0945">Host-virus interaction</keyword>
<keyword id="KW-0378">Hydrolase</keyword>
<keyword id="KW-1090">Inhibition of host innate immune response by virus</keyword>
<keyword id="KW-1114">Inhibition of host interferon signaling pathway by virus</keyword>
<keyword id="KW-1106">Inhibition of host STAT2 by virus</keyword>
<keyword id="KW-0922">Interferon antiviral system evasion</keyword>
<keyword id="KW-0472">Membrane</keyword>
<keyword id="KW-0479">Metal-binding</keyword>
<keyword id="KW-0489">Methyltransferase</keyword>
<keyword id="KW-0506">mRNA capping</keyword>
<keyword id="KW-0507">mRNA processing</keyword>
<keyword id="KW-0511">Multifunctional enzyme</keyword>
<keyword id="KW-0547">Nucleotide-binding</keyword>
<keyword id="KW-0548">Nucleotidyltransferase</keyword>
<keyword id="KW-0597">Phosphoprotein</keyword>
<keyword id="KW-0645">Protease</keyword>
<keyword id="KW-0694">RNA-binding</keyword>
<keyword id="KW-0696">RNA-directed RNA polymerase</keyword>
<keyword id="KW-0949">S-adenosyl-L-methionine</keyword>
<keyword id="KW-0964">Secreted</keyword>
<keyword id="KW-0720">Serine protease</keyword>
<keyword id="KW-0941">Suppressor of RNA silencing</keyword>
<keyword id="KW-0804">Transcription</keyword>
<keyword id="KW-0805">Transcription regulation</keyword>
<keyword id="KW-0808">Transferase</keyword>
<keyword id="KW-0812">Transmembrane</keyword>
<keyword id="KW-1133">Transmembrane helix</keyword>
<keyword id="KW-0832">Ubl conjugation</keyword>
<keyword id="KW-1161">Viral attachment to host cell</keyword>
<keyword id="KW-0261">Viral envelope protein</keyword>
<keyword id="KW-0899">Viral immunoevasion</keyword>
<keyword id="KW-1162">Viral penetration into host cytoplasm</keyword>
<keyword id="KW-0693">Viral RNA replication</keyword>
<keyword id="KW-0946">Virion</keyword>
<keyword id="KW-1164">Virus endocytosis by host</keyword>
<keyword id="KW-1160">Virus entry into host cell</keyword>
<keyword id="KW-0862">Zinc</keyword>
<evidence type="ECO:0000250" key="1"/>
<evidence type="ECO:0000250" key="2">
    <source>
        <dbReference type="UniProtKB" id="P03314"/>
    </source>
</evidence>
<evidence type="ECO:0000250" key="3">
    <source>
        <dbReference type="UniProtKB" id="P14335"/>
    </source>
</evidence>
<evidence type="ECO:0000250" key="4">
    <source>
        <dbReference type="UniProtKB" id="P14336"/>
    </source>
</evidence>
<evidence type="ECO:0000250" key="5">
    <source>
        <dbReference type="UniProtKB" id="P14340"/>
    </source>
</evidence>
<evidence type="ECO:0000250" key="6">
    <source>
        <dbReference type="UniProtKB" id="P17763"/>
    </source>
</evidence>
<evidence type="ECO:0000250" key="7">
    <source>
        <dbReference type="UniProtKB" id="P29990"/>
    </source>
</evidence>
<evidence type="ECO:0000250" key="8">
    <source>
        <dbReference type="UniProtKB" id="Q32ZE1"/>
    </source>
</evidence>
<evidence type="ECO:0000250" key="9">
    <source>
        <dbReference type="UniProtKB" id="Q6YMS4"/>
    </source>
</evidence>
<evidence type="ECO:0000250" key="10">
    <source>
        <dbReference type="UniProtKB" id="Q9Q6P4"/>
    </source>
</evidence>
<evidence type="ECO:0000255" key="11"/>
<evidence type="ECO:0000255" key="12">
    <source>
        <dbReference type="PROSITE-ProRule" id="PRU00539"/>
    </source>
</evidence>
<evidence type="ECO:0000255" key="13">
    <source>
        <dbReference type="PROSITE-ProRule" id="PRU00541"/>
    </source>
</evidence>
<evidence type="ECO:0000255" key="14">
    <source>
        <dbReference type="PROSITE-ProRule" id="PRU00859"/>
    </source>
</evidence>
<evidence type="ECO:0000255" key="15">
    <source>
        <dbReference type="PROSITE-ProRule" id="PRU00860"/>
    </source>
</evidence>
<evidence type="ECO:0000255" key="16">
    <source>
        <dbReference type="PROSITE-ProRule" id="PRU00924"/>
    </source>
</evidence>
<evidence type="ECO:0000256" key="17">
    <source>
        <dbReference type="SAM" id="MobiDB-lite"/>
    </source>
</evidence>
<evidence type="ECO:0000305" key="18"/>
<evidence type="ECO:0007829" key="19">
    <source>
        <dbReference type="PDB" id="2JQM"/>
    </source>
</evidence>
<evidence type="ECO:0007829" key="20">
    <source>
        <dbReference type="PDB" id="6EPK"/>
    </source>
</evidence>
<evidence type="ECO:0007829" key="21">
    <source>
        <dbReference type="PDB" id="8OFN"/>
    </source>
</evidence>
<protein>
    <recommendedName>
        <fullName>Genome polyprotein</fullName>
    </recommendedName>
    <component>
        <recommendedName>
            <fullName>Capsid protein C</fullName>
        </recommendedName>
        <alternativeName>
            <fullName>Core protein</fullName>
        </alternativeName>
    </component>
    <component>
        <recommendedName>
            <fullName>Protein prM</fullName>
        </recommendedName>
    </component>
    <component>
        <recommendedName>
            <fullName>Peptide pr</fullName>
        </recommendedName>
    </component>
    <component>
        <recommendedName>
            <fullName>Small envelope protein M</fullName>
        </recommendedName>
        <alternativeName>
            <fullName>Matrix protein</fullName>
        </alternativeName>
    </component>
    <component>
        <recommendedName>
            <fullName>Envelope protein E</fullName>
        </recommendedName>
    </component>
    <component>
        <recommendedName>
            <fullName>Non-structural protein 1</fullName>
            <shortName>NS1</shortName>
        </recommendedName>
    </component>
    <component>
        <recommendedName>
            <fullName>Non-structural protein 2A</fullName>
            <shortName>NS2A</shortName>
        </recommendedName>
    </component>
    <component>
        <recommendedName>
            <fullName>Non-structural protein 2A-alpha</fullName>
            <shortName>NS2A-alpha</shortName>
        </recommendedName>
    </component>
    <component>
        <recommendedName>
            <fullName>Serine protease subunit NS2B</fullName>
        </recommendedName>
        <alternativeName>
            <fullName>Flavivirin protease NS2B regulatory subunit</fullName>
        </alternativeName>
        <alternativeName>
            <fullName>Non-structural protein 2B</fullName>
        </alternativeName>
    </component>
    <component>
        <recommendedName>
            <fullName>Serine protease NS3</fullName>
            <ecNumber>3.4.21.91</ecNumber>
            <ecNumber evidence="10">3.6.1.15</ecNumber>
            <ecNumber evidence="10">3.6.4.13</ecNumber>
        </recommendedName>
        <alternativeName>
            <fullName>Flavivirin protease NS3 catalytic subunit</fullName>
        </alternativeName>
        <alternativeName>
            <fullName>Non-structural protein 3</fullName>
        </alternativeName>
    </component>
    <component>
        <recommendedName>
            <fullName>Non-structural protein 4A</fullName>
            <shortName>NS4A</shortName>
        </recommendedName>
    </component>
    <component>
        <recommendedName>
            <fullName>Peptide 2k</fullName>
        </recommendedName>
    </component>
    <component>
        <recommendedName>
            <fullName>Non-structural protein 4B</fullName>
            <shortName>NS4B</shortName>
        </recommendedName>
    </component>
    <component>
        <recommendedName>
            <fullName>RNA-directed RNA polymerase NS5</fullName>
            <ecNumber evidence="16">2.1.1.56</ecNumber>
            <ecNumber evidence="16">2.1.1.57</ecNumber>
            <ecNumber evidence="12">2.7.7.48</ecNumber>
        </recommendedName>
        <alternativeName>
            <fullName>Non-structural protein 5</fullName>
        </alternativeName>
    </component>
</protein>
<accession>Q6DV88</accession>
<accession>Q89278</accession>
<organism>
    <name type="scientific">Yellow fever virus (strain Ghana/Asibi/1927)</name>
    <name type="common">YFV</name>
    <dbReference type="NCBI Taxonomy" id="407134"/>
    <lineage>
        <taxon>Viruses</taxon>
        <taxon>Riboviria</taxon>
        <taxon>Orthornavirae</taxon>
        <taxon>Kitrinoviricota</taxon>
        <taxon>Flasuviricetes</taxon>
        <taxon>Amarillovirales</taxon>
        <taxon>Flaviviridae</taxon>
        <taxon>Orthoflavivirus</taxon>
        <taxon>Orthoflavivirus flavi</taxon>
    </lineage>
</organism>
<feature type="chain" id="PRO_0000405155" description="Genome polyprotein">
    <location>
        <begin position="1"/>
        <end position="3411"/>
    </location>
</feature>
<feature type="chain" id="PRO_0000261455" description="Capsid protein C" evidence="2">
    <location>
        <begin position="1"/>
        <end position="101"/>
    </location>
</feature>
<feature type="propeptide" id="PRO_0000261456" description="ER anchor for the capsid protein C, removed in mature form by serine protease NS3" evidence="2">
    <location>
        <begin position="102"/>
        <end position="121"/>
    </location>
</feature>
<feature type="chain" id="PRO_0000261457" description="Protein prM" evidence="7">
    <location>
        <begin position="122"/>
        <end position="285"/>
    </location>
</feature>
<feature type="chain" id="PRO_0000261458" description="Peptide pr" evidence="7">
    <location>
        <begin position="122"/>
        <end position="210"/>
    </location>
</feature>
<feature type="chain" id="PRO_0000261459" description="Small envelope protein M" evidence="7">
    <location>
        <begin position="211"/>
        <end position="285"/>
    </location>
</feature>
<feature type="chain" id="PRO_0000261460" description="Envelope protein E" evidence="7">
    <location>
        <begin position="286"/>
        <end position="778"/>
    </location>
</feature>
<feature type="chain" id="PRO_0000261461" description="Non-structural protein 1" evidence="2">
    <location>
        <begin position="779"/>
        <end position="1130"/>
    </location>
</feature>
<feature type="chain" id="PRO_0000261462" description="Non-structural protein 2A" evidence="7">
    <location>
        <begin position="1131"/>
        <end position="1354"/>
    </location>
</feature>
<feature type="chain" id="PRO_0000261463" description="Non-structural protein 2A-alpha" evidence="7">
    <location>
        <begin position="1131"/>
        <end position="1320"/>
    </location>
</feature>
<feature type="chain" id="PRO_0000261464" description="Serine protease subunit NS2B" evidence="2">
    <location>
        <begin position="1355"/>
        <end position="1484"/>
    </location>
</feature>
<feature type="chain" id="PRO_0000261465" description="Serine protease NS3" evidence="2">
    <location>
        <begin position="1485"/>
        <end position="2107"/>
    </location>
</feature>
<feature type="chain" id="PRO_0000261466" description="Non-structural protein 4A" evidence="2">
    <location>
        <begin position="2108"/>
        <end position="2233"/>
    </location>
</feature>
<feature type="peptide" id="PRO_0000261467" description="Peptide 2k" evidence="2">
    <location>
        <begin position="2234"/>
        <end position="2256"/>
    </location>
</feature>
<feature type="chain" id="PRO_0000261468" description="Non-structural protein 4B" evidence="2">
    <location>
        <begin position="2257"/>
        <end position="2506"/>
    </location>
</feature>
<feature type="chain" id="PRO_0000261469" description="RNA-directed RNA polymerase NS5" evidence="2">
    <location>
        <begin position="2507"/>
        <end position="3411"/>
    </location>
</feature>
<feature type="topological domain" description="Cytoplasmic" evidence="11">
    <location>
        <begin position="1"/>
        <end position="104"/>
    </location>
</feature>
<feature type="transmembrane region" description="Helical" evidence="11">
    <location>
        <begin position="105"/>
        <end position="125"/>
    </location>
</feature>
<feature type="topological domain" description="Extracellular" evidence="11">
    <location>
        <begin position="126"/>
        <end position="244"/>
    </location>
</feature>
<feature type="transmembrane region" description="Helical" evidence="11">
    <location>
        <begin position="245"/>
        <end position="265"/>
    </location>
</feature>
<feature type="topological domain" description="Cytoplasmic" evidence="11">
    <location>
        <begin position="266"/>
        <end position="270"/>
    </location>
</feature>
<feature type="transmembrane region" description="Helical" evidence="18">
    <location>
        <begin position="271"/>
        <end position="285"/>
    </location>
</feature>
<feature type="topological domain" description="Extracellular" evidence="11">
    <location>
        <begin position="286"/>
        <end position="730"/>
    </location>
</feature>
<feature type="transmembrane region" description="Helical" evidence="11">
    <location>
        <begin position="731"/>
        <end position="751"/>
    </location>
</feature>
<feature type="topological domain" description="Extracellular" evidence="11">
    <location>
        <begin position="752"/>
        <end position="757"/>
    </location>
</feature>
<feature type="transmembrane region" description="Helical" evidence="2">
    <location>
        <begin position="758"/>
        <end position="778"/>
    </location>
</feature>
<feature type="topological domain" description="Extracellular" evidence="2">
    <location>
        <begin position="779"/>
        <end position="1132"/>
    </location>
</feature>
<feature type="transmembrane region" description="Helical" evidence="2">
    <location>
        <begin position="1133"/>
        <end position="1153"/>
    </location>
</feature>
<feature type="topological domain" description="Cytoplasmic" evidence="2">
    <location>
        <begin position="1154"/>
        <end position="1201"/>
    </location>
</feature>
<feature type="transmembrane region" description="Helical" evidence="2">
    <location>
        <begin position="1202"/>
        <end position="1222"/>
    </location>
</feature>
<feature type="topological domain" description="Lumenal" evidence="2">
    <location>
        <begin position="1223"/>
        <end position="1287"/>
    </location>
</feature>
<feature type="transmembrane region" description="Helical" evidence="2">
    <location>
        <begin position="1288"/>
        <end position="1308"/>
    </location>
</feature>
<feature type="topological domain" description="Cytoplasmic" evidence="2">
    <location>
        <begin position="1309"/>
        <end position="1355"/>
    </location>
</feature>
<feature type="transmembrane region" description="Helical" evidence="2">
    <location>
        <begin position="1356"/>
        <end position="1376"/>
    </location>
</feature>
<feature type="topological domain" description="Lumenal" evidence="2">
    <location>
        <begin position="1377"/>
        <end position="1378"/>
    </location>
</feature>
<feature type="transmembrane region" description="Helical" evidence="11">
    <location>
        <begin position="1379"/>
        <end position="1399"/>
    </location>
</feature>
<feature type="topological domain" description="Cytoplasmic" evidence="11">
    <location>
        <begin position="1400"/>
        <end position="1456"/>
    </location>
</feature>
<feature type="intramembrane region" description="Helical" evidence="11">
    <location>
        <begin position="1457"/>
        <end position="1477"/>
    </location>
</feature>
<feature type="topological domain" description="Cytoplasmic" evidence="11">
    <location>
        <begin position="1478"/>
        <end position="2157"/>
    </location>
</feature>
<feature type="transmembrane region" description="Helical" evidence="11">
    <location>
        <begin position="2158"/>
        <end position="2178"/>
    </location>
</feature>
<feature type="topological domain" description="Lumenal" evidence="11">
    <location>
        <begin position="2179"/>
        <end position="2186"/>
    </location>
</feature>
<feature type="intramembrane region" description="Helical" evidence="11">
    <location>
        <begin position="2187"/>
        <end position="2207"/>
    </location>
</feature>
<feature type="topological domain" description="Lumenal" evidence="11">
    <location>
        <begin position="2208"/>
        <end position="2209"/>
    </location>
</feature>
<feature type="transmembrane region" description="Helical" evidence="11">
    <location>
        <begin position="2210"/>
        <end position="2230"/>
    </location>
</feature>
<feature type="topological domain" description="Cytoplasmic" evidence="11">
    <location>
        <begin position="2231"/>
        <end position="2241"/>
    </location>
</feature>
<feature type="transmembrane region" description="Helical; Note=Signal for NS4B" evidence="11">
    <location>
        <begin position="2242"/>
        <end position="2262"/>
    </location>
</feature>
<feature type="topological domain" description="Lumenal" evidence="11">
    <location>
        <begin position="2263"/>
        <end position="2293"/>
    </location>
</feature>
<feature type="intramembrane region" description="Helical" evidence="11">
    <location>
        <begin position="2294"/>
        <end position="2314"/>
    </location>
</feature>
<feature type="topological domain" description="Lumenal" evidence="11">
    <location>
        <begin position="2315"/>
        <end position="2360"/>
    </location>
</feature>
<feature type="transmembrane region" description="Helical" evidence="11">
    <location>
        <begin position="2361"/>
        <end position="2380"/>
    </location>
</feature>
<feature type="topological domain" description="Cytoplasmic" evidence="11">
    <location>
        <begin position="2381"/>
        <end position="2421"/>
    </location>
</feature>
<feature type="transmembrane region" description="Helical" evidence="11">
    <location>
        <begin position="2422"/>
        <end position="2442"/>
    </location>
</feature>
<feature type="topological domain" description="Lumenal" evidence="11">
    <location>
        <begin position="2443"/>
        <end position="2445"/>
    </location>
</feature>
<feature type="transmembrane region" description="Helical" evidence="11">
    <location>
        <begin position="2446"/>
        <end position="2466"/>
    </location>
</feature>
<feature type="topological domain" description="Cytoplasmic" evidence="11">
    <location>
        <begin position="2467"/>
        <end position="3411"/>
    </location>
</feature>
<feature type="domain" description="Peptidase S7" evidence="15">
    <location>
        <begin position="1485"/>
        <end position="1665"/>
    </location>
</feature>
<feature type="domain" description="Helicase ATP-binding" evidence="13">
    <location>
        <begin position="1669"/>
        <end position="1825"/>
    </location>
</feature>
<feature type="domain" description="Helicase C-terminal">
    <location>
        <begin position="1820"/>
        <end position="1997"/>
    </location>
</feature>
<feature type="domain" description="mRNA cap 0-1 NS5-type MT" evidence="16">
    <location>
        <begin position="2507"/>
        <end position="2771"/>
    </location>
</feature>
<feature type="domain" description="RdRp catalytic" evidence="12">
    <location>
        <begin position="3035"/>
        <end position="3187"/>
    </location>
</feature>
<feature type="region of interest" description="Hydrophobic; homodimerization of capsid protein C" evidence="7">
    <location>
        <begin position="38"/>
        <end position="72"/>
    </location>
</feature>
<feature type="region of interest" description="Fusion peptide" evidence="4">
    <location>
        <begin position="383"/>
        <end position="396"/>
    </location>
</feature>
<feature type="region of interest" description="Interacts with and activates NS3 protease" evidence="14">
    <location>
        <begin position="1407"/>
        <end position="1446"/>
    </location>
</feature>
<feature type="region of interest" description="Important for RNA-binding" evidence="5">
    <location>
        <begin position="1673"/>
        <end position="1676"/>
    </location>
</feature>
<feature type="region of interest" description="Disordered" evidence="17">
    <location>
        <begin position="1942"/>
        <end position="1961"/>
    </location>
</feature>
<feature type="short sequence motif" description="DEAH box" evidence="13">
    <location>
        <begin position="1773"/>
        <end position="1776"/>
    </location>
</feature>
<feature type="short sequence motif" description="Nuclear localization signal" evidence="1">
    <location>
        <begin position="2878"/>
        <end position="2911"/>
    </location>
</feature>
<feature type="active site" description="Charge relay system; for serine protease NS3 activity" evidence="15">
    <location>
        <position position="1537"/>
    </location>
</feature>
<feature type="active site" description="Charge relay system; for serine protease NS3 activity" evidence="15">
    <location>
        <position position="1561"/>
    </location>
</feature>
<feature type="active site" description="Charge relay system; for serine protease NS3 activity" evidence="15">
    <location>
        <position position="1622"/>
    </location>
</feature>
<feature type="active site" description="For 2'-O-MTase activity" evidence="9">
    <location>
        <position position="2567"/>
    </location>
</feature>
<feature type="active site" description="For 2'-O-MTase activity" evidence="9">
    <location>
        <position position="2652"/>
    </location>
</feature>
<feature type="active site" description="For 2'-O-MTase activity" evidence="9">
    <location>
        <position position="2688"/>
    </location>
</feature>
<feature type="active site" description="For 2'-O-MTase activity" evidence="9">
    <location>
        <position position="2724"/>
    </location>
</feature>
<feature type="binding site" evidence="13">
    <location>
        <begin position="1682"/>
        <end position="1689"/>
    </location>
    <ligand>
        <name>ATP</name>
        <dbReference type="ChEBI" id="CHEBI:30616"/>
    </ligand>
</feature>
<feature type="binding site" evidence="16">
    <location>
        <position position="2562"/>
    </location>
    <ligand>
        <name>S-adenosyl-L-methionine</name>
        <dbReference type="ChEBI" id="CHEBI:59789"/>
    </ligand>
</feature>
<feature type="binding site" evidence="16">
    <location>
        <position position="2592"/>
    </location>
    <ligand>
        <name>S-adenosyl-L-methionine</name>
        <dbReference type="ChEBI" id="CHEBI:59789"/>
    </ligand>
</feature>
<feature type="binding site" evidence="16">
    <location>
        <position position="2593"/>
    </location>
    <ligand>
        <name>S-adenosyl-L-methionine</name>
        <dbReference type="ChEBI" id="CHEBI:59789"/>
    </ligand>
</feature>
<feature type="binding site" evidence="16">
    <location>
        <position position="2610"/>
    </location>
    <ligand>
        <name>S-adenosyl-L-methionine</name>
        <dbReference type="ChEBI" id="CHEBI:59789"/>
    </ligand>
</feature>
<feature type="binding site" evidence="16">
    <location>
        <position position="2611"/>
    </location>
    <ligand>
        <name>S-adenosyl-L-methionine</name>
        <dbReference type="ChEBI" id="CHEBI:59789"/>
    </ligand>
</feature>
<feature type="binding site" evidence="16">
    <location>
        <position position="2637"/>
    </location>
    <ligand>
        <name>S-adenosyl-L-methionine</name>
        <dbReference type="ChEBI" id="CHEBI:59789"/>
    </ligand>
</feature>
<feature type="binding site" evidence="16">
    <location>
        <position position="2638"/>
    </location>
    <ligand>
        <name>S-adenosyl-L-methionine</name>
        <dbReference type="ChEBI" id="CHEBI:59789"/>
    </ligand>
</feature>
<feature type="binding site" evidence="16">
    <location>
        <position position="2653"/>
    </location>
    <ligand>
        <name>S-adenosyl-L-methionine</name>
        <dbReference type="ChEBI" id="CHEBI:59789"/>
    </ligand>
</feature>
<feature type="binding site" evidence="16">
    <location>
        <position position="2726"/>
    </location>
    <ligand>
        <name>S-adenosyl-L-methionine</name>
        <dbReference type="ChEBI" id="CHEBI:59789"/>
    </ligand>
</feature>
<feature type="binding site" evidence="3">
    <location>
        <position position="2945"/>
    </location>
    <ligand>
        <name>Zn(2+)</name>
        <dbReference type="ChEBI" id="CHEBI:29105"/>
        <label>1</label>
    </ligand>
</feature>
<feature type="binding site" evidence="3">
    <location>
        <position position="2949"/>
    </location>
    <ligand>
        <name>Zn(2+)</name>
        <dbReference type="ChEBI" id="CHEBI:29105"/>
        <label>1</label>
    </ligand>
</feature>
<feature type="binding site" evidence="3">
    <location>
        <position position="2954"/>
    </location>
    <ligand>
        <name>Zn(2+)</name>
        <dbReference type="ChEBI" id="CHEBI:29105"/>
        <label>1</label>
    </ligand>
</feature>
<feature type="binding site" evidence="3">
    <location>
        <position position="2957"/>
    </location>
    <ligand>
        <name>Zn(2+)</name>
        <dbReference type="ChEBI" id="CHEBI:29105"/>
        <label>1</label>
    </ligand>
</feature>
<feature type="binding site" evidence="3">
    <location>
        <position position="3222"/>
    </location>
    <ligand>
        <name>Zn(2+)</name>
        <dbReference type="ChEBI" id="CHEBI:29105"/>
        <label>2</label>
    </ligand>
</feature>
<feature type="binding site" evidence="3">
    <location>
        <position position="3238"/>
    </location>
    <ligand>
        <name>Zn(2+)</name>
        <dbReference type="ChEBI" id="CHEBI:29105"/>
        <label>2</label>
    </ligand>
</feature>
<feature type="binding site" evidence="3">
    <location>
        <position position="3357"/>
    </location>
    <ligand>
        <name>Zn(2+)</name>
        <dbReference type="ChEBI" id="CHEBI:29105"/>
        <label>2</label>
    </ligand>
</feature>
<feature type="site" description="Cleavage; by viral protease NS3" evidence="2">
    <location>
        <begin position="101"/>
        <end position="102"/>
    </location>
</feature>
<feature type="site" description="Cleavage; by host signal peptidase" evidence="2">
    <location>
        <begin position="121"/>
        <end position="122"/>
    </location>
</feature>
<feature type="site" description="Cleavage; by host furin" evidence="7">
    <location>
        <begin position="210"/>
        <end position="211"/>
    </location>
</feature>
<feature type="site" description="Cleavage; by host signal peptidase" evidence="7">
    <location>
        <begin position="285"/>
        <end position="286"/>
    </location>
</feature>
<feature type="site" description="Cleavage; by host signal peptidase" evidence="2">
    <location>
        <begin position="778"/>
        <end position="779"/>
    </location>
</feature>
<feature type="site" description="Cleavage; by host" evidence="7">
    <location>
        <begin position="1130"/>
        <end position="1131"/>
    </location>
</feature>
<feature type="site" description="Cleavage; by viral protease NS3" evidence="7">
    <location>
        <begin position="1354"/>
        <end position="1355"/>
    </location>
</feature>
<feature type="site" description="Cleavage; by autolysis" evidence="2">
    <location>
        <begin position="1484"/>
        <end position="1485"/>
    </location>
</feature>
<feature type="site" description="Involved in NS3 ATPase and RTPase activities" evidence="3">
    <location>
        <position position="1945"/>
    </location>
</feature>
<feature type="site" description="Involved in NS3 ATPase and RTPase activities" evidence="3">
    <location>
        <position position="1948"/>
    </location>
</feature>
<feature type="site" description="Cleavage; by autolysis" evidence="2">
    <location>
        <begin position="2107"/>
        <end position="2108"/>
    </location>
</feature>
<feature type="site" description="Cleavage; by viral protease NS3" evidence="7">
    <location>
        <begin position="2233"/>
        <end position="2234"/>
    </location>
</feature>
<feature type="site" description="Cleavage; by host signal peptidase" evidence="7">
    <location>
        <begin position="2256"/>
        <end position="2257"/>
    </location>
</feature>
<feature type="site" description="Cleavage; by viral protease NS3" evidence="2">
    <location>
        <begin position="2506"/>
        <end position="2507"/>
    </location>
</feature>
<feature type="site" description="mRNA cap binding" evidence="16">
    <location>
        <position position="2519"/>
    </location>
</feature>
<feature type="site" description="mRNA cap binding; via carbonyl oxygen" evidence="16">
    <location>
        <position position="2522"/>
    </location>
</feature>
<feature type="site" description="mRNA cap binding" evidence="16">
    <location>
        <position position="2523"/>
    </location>
</feature>
<feature type="site" description="mRNA cap binding; via carbonyl oxygen" evidence="16">
    <location>
        <position position="2525"/>
    </location>
</feature>
<feature type="site" description="mRNA cap binding" evidence="16">
    <location>
        <position position="2530"/>
    </location>
</feature>
<feature type="site" description="mRNA cap binding" evidence="16">
    <location>
        <position position="2534"/>
    </location>
</feature>
<feature type="site" description="Essential for 2'-O-methyltransferase activity" evidence="16">
    <location>
        <position position="2567"/>
    </location>
</feature>
<feature type="site" description="Essential for 2'-O-methyltransferase and N-7 methyltransferase activity" evidence="16">
    <location>
        <position position="2652"/>
    </location>
</feature>
<feature type="site" description="mRNA cap binding" evidence="16">
    <location>
        <position position="2656"/>
    </location>
</feature>
<feature type="site" description="Essential for 2'-O-methyltransferase activity" evidence="16">
    <location>
        <position position="2688"/>
    </location>
</feature>
<feature type="site" description="mRNA cap binding" evidence="16">
    <location>
        <position position="2719"/>
    </location>
</feature>
<feature type="site" description="mRNA cap binding" evidence="16">
    <location>
        <position position="2721"/>
    </location>
</feature>
<feature type="site" description="Essential for 2'-O-methyltransferase activity" evidence="16">
    <location>
        <position position="2724"/>
    </location>
</feature>
<feature type="modified residue" description="N6-acetyllysine; by host" evidence="8">
    <location>
        <position position="1877"/>
    </location>
</feature>
<feature type="modified residue" description="Phosphoserine" evidence="2">
    <location>
        <position position="2562"/>
    </location>
</feature>
<feature type="glycosylation site" description="N-linked (GlcNAc...) asparagine; by host" evidence="11">
    <location>
        <position position="134"/>
    </location>
</feature>
<feature type="glycosylation site" description="N-linked (GlcNAc...) asparagine; by host" evidence="11">
    <location>
        <position position="150"/>
    </location>
</feature>
<feature type="glycosylation site" description="N-linked (GlcNAc...) asparagine; by host" evidence="11">
    <location>
        <position position="908"/>
    </location>
</feature>
<feature type="glycosylation site" description="N-linked (GlcNAc...) asparagine; by host" evidence="11">
    <location>
        <position position="986"/>
    </location>
</feature>
<feature type="disulfide bond" evidence="6">
    <location>
        <begin position="288"/>
        <end position="315"/>
    </location>
</feature>
<feature type="disulfide bond" evidence="6">
    <location>
        <begin position="345"/>
        <end position="406"/>
    </location>
</feature>
<feature type="disulfide bond" evidence="1">
    <location>
        <begin position="345"/>
        <end position="401"/>
    </location>
</feature>
<feature type="disulfide bond" evidence="6">
    <location>
        <begin position="359"/>
        <end position="390"/>
    </location>
</feature>
<feature type="disulfide bond" evidence="1">
    <location>
        <begin position="377"/>
        <end position="406"/>
    </location>
</feature>
<feature type="disulfide bond" evidence="6">
    <location>
        <begin position="377"/>
        <end position="401"/>
    </location>
</feature>
<feature type="disulfide bond" evidence="6">
    <location>
        <begin position="467"/>
        <end position="568"/>
    </location>
</feature>
<feature type="disulfide bond">
    <location>
        <begin position="585"/>
        <end position="615"/>
    </location>
</feature>
<feature type="disulfide bond" evidence="6">
    <location>
        <begin position="782"/>
        <end position="793"/>
    </location>
</feature>
<feature type="disulfide bond" evidence="6">
    <location>
        <begin position="833"/>
        <end position="921"/>
    </location>
</feature>
<feature type="disulfide bond" evidence="6">
    <location>
        <begin position="957"/>
        <end position="1002"/>
    </location>
</feature>
<feature type="disulfide bond" evidence="6">
    <location>
        <begin position="1058"/>
        <end position="1107"/>
    </location>
</feature>
<feature type="disulfide bond" evidence="6">
    <location>
        <begin position="1069"/>
        <end position="1091"/>
    </location>
</feature>
<feature type="disulfide bond" evidence="6">
    <location>
        <begin position="1090"/>
        <end position="1094"/>
    </location>
</feature>
<feature type="sequence variant" description="In strain: Isolate Senegal/French viscerotropic virus FVV/27.">
    <original>E</original>
    <variation>G</variation>
    <location>
        <position position="512"/>
    </location>
</feature>
<feature type="sequence variant" description="In strain: Isolate Senegal/French viscerotropic virus FVV/27.">
    <original>K</original>
    <variation>R</variation>
    <location>
        <position position="616"/>
    </location>
</feature>
<feature type="sequence variant" description="In strain: Isolate Senegal/French viscerotropic virus FVV/27.">
    <original>A</original>
    <variation>V</variation>
    <location>
        <position position="692"/>
    </location>
</feature>
<feature type="sequence variant" description="In strain: Isolate Senegal/French viscerotropic virus FVV/27.">
    <original>L</original>
    <variation>P</variation>
    <location>
        <position position="1006"/>
    </location>
</feature>
<feature type="sequence variant" description="In strain: Isolate Senegal/French viscerotropic virus FVV/27.">
    <original>Y</original>
    <variation>S</variation>
    <location>
        <position position="1509"/>
    </location>
</feature>
<feature type="sequence variant" description="In strain: Isolate Senegal/French viscerotropic virus FVV/27.">
    <original>V</original>
    <variation>I</variation>
    <location>
        <position position="1764"/>
    </location>
</feature>
<feature type="sequence variant" description="In strain: Isolate Senegal/French viscerotropic virus FVV/27.">
    <original>K</original>
    <variation>E</variation>
    <location>
        <position position="2502"/>
    </location>
</feature>
<feature type="sequence variant" description="In strain: Isolate Senegal/French viscerotropic virus FVV/27.">
    <original>S</original>
    <variation>R</variation>
    <location>
        <position position="2508"/>
    </location>
</feature>
<feature type="helix" evidence="20">
    <location>
        <begin position="287"/>
        <end position="290"/>
    </location>
</feature>
<feature type="strand" evidence="20">
    <location>
        <begin position="291"/>
        <end position="299"/>
    </location>
</feature>
<feature type="strand" evidence="20">
    <location>
        <begin position="305"/>
        <end position="312"/>
    </location>
</feature>
<feature type="strand" evidence="20">
    <location>
        <begin position="315"/>
        <end position="320"/>
    </location>
</feature>
<feature type="strand" evidence="20">
    <location>
        <begin position="323"/>
        <end position="337"/>
    </location>
</feature>
<feature type="strand" evidence="20">
    <location>
        <begin position="340"/>
        <end position="358"/>
    </location>
</feature>
<feature type="helix" evidence="20">
    <location>
        <begin position="368"/>
        <end position="371"/>
    </location>
</feature>
<feature type="strand" evidence="20">
    <location>
        <begin position="375"/>
        <end position="385"/>
    </location>
</feature>
<feature type="turn" evidence="20">
    <location>
        <begin position="386"/>
        <end position="389"/>
    </location>
</feature>
<feature type="strand" evidence="20">
    <location>
        <begin position="394"/>
        <end position="414"/>
    </location>
</feature>
<feature type="strand" evidence="20">
    <location>
        <begin position="420"/>
        <end position="428"/>
    </location>
</feature>
<feature type="helix" evidence="20">
    <location>
        <begin position="434"/>
        <end position="436"/>
    </location>
</feature>
<feature type="helix" evidence="20">
    <location>
        <begin position="437"/>
        <end position="440"/>
    </location>
</feature>
<feature type="strand" evidence="20">
    <location>
        <begin position="442"/>
        <end position="447"/>
    </location>
</feature>
<feature type="strand" evidence="20">
    <location>
        <begin position="453"/>
        <end position="457"/>
    </location>
</feature>
<feature type="turn" evidence="20">
    <location>
        <begin position="458"/>
        <end position="460"/>
    </location>
</feature>
<feature type="strand" evidence="20">
    <location>
        <begin position="461"/>
        <end position="470"/>
    </location>
</feature>
<feature type="strand" evidence="20">
    <location>
        <begin position="475"/>
        <end position="483"/>
    </location>
</feature>
<feature type="strand" evidence="20">
    <location>
        <begin position="486"/>
        <end position="491"/>
    </location>
</feature>
<feature type="helix" evidence="20">
    <location>
        <begin position="492"/>
        <end position="496"/>
    </location>
</feature>
<feature type="strand" evidence="21">
    <location>
        <begin position="502"/>
        <end position="504"/>
    </location>
</feature>
<feature type="helix" evidence="20">
    <location>
        <begin position="513"/>
        <end position="516"/>
    </location>
</feature>
<feature type="strand" evidence="20">
    <location>
        <begin position="517"/>
        <end position="519"/>
    </location>
</feature>
<feature type="strand" evidence="20">
    <location>
        <begin position="529"/>
        <end position="531"/>
    </location>
</feature>
<feature type="helix" evidence="20">
    <location>
        <begin position="536"/>
        <end position="543"/>
    </location>
</feature>
<feature type="strand" evidence="20">
    <location>
        <begin position="546"/>
        <end position="551"/>
    </location>
</feature>
<feature type="strand" evidence="20">
    <location>
        <begin position="556"/>
        <end position="560"/>
    </location>
</feature>
<feature type="strand" evidence="20">
    <location>
        <begin position="565"/>
        <end position="571"/>
    </location>
</feature>
<feature type="turn" evidence="19">
    <location>
        <begin position="578"/>
        <end position="580"/>
    </location>
</feature>
<feature type="strand" evidence="20">
    <location>
        <begin position="590"/>
        <end position="597"/>
    </location>
</feature>
<feature type="strand" evidence="20">
    <location>
        <begin position="599"/>
        <end position="601"/>
    </location>
</feature>
<feature type="strand" evidence="20">
    <location>
        <begin position="603"/>
        <end position="609"/>
    </location>
</feature>
<feature type="strand" evidence="20">
    <location>
        <begin position="614"/>
        <end position="616"/>
    </location>
</feature>
<feature type="strand" evidence="20">
    <location>
        <begin position="619"/>
        <end position="626"/>
    </location>
</feature>
<feature type="strand" evidence="20">
    <location>
        <begin position="632"/>
        <end position="636"/>
    </location>
</feature>
<feature type="strand" evidence="20">
    <location>
        <begin position="640"/>
        <end position="643"/>
    </location>
</feature>
<feature type="strand" evidence="20">
    <location>
        <begin position="646"/>
        <end position="653"/>
    </location>
</feature>
<feature type="strand" evidence="20">
    <location>
        <begin position="656"/>
        <end position="666"/>
    </location>
</feature>
<feature type="strand" evidence="20">
    <location>
        <begin position="670"/>
        <end position="676"/>
    </location>
</feature>
<feature type="turn" evidence="19">
    <location>
        <begin position="679"/>
        <end position="681"/>
    </location>
</feature>
<dbReference type="EC" id="3.4.21.91"/>
<dbReference type="EC" id="3.6.1.15" evidence="10"/>
<dbReference type="EC" id="3.6.4.13" evidence="10"/>
<dbReference type="EC" id="2.1.1.56" evidence="16"/>
<dbReference type="EC" id="2.1.1.57" evidence="16"/>
<dbReference type="EC" id="2.7.7.48" evidence="12"/>
<dbReference type="EMBL" id="U21056">
    <property type="protein sequence ID" value="AAA99713.1"/>
    <property type="molecule type" value="Genomic_RNA"/>
</dbReference>
<dbReference type="EMBL" id="AY640589">
    <property type="protein sequence ID" value="AAT58050.1"/>
    <property type="molecule type" value="Genomic_RNA"/>
</dbReference>
<dbReference type="PDB" id="2JQM">
    <property type="method" value="NMR"/>
    <property type="chains" value="A=573-683"/>
</dbReference>
<dbReference type="PDB" id="2JV6">
    <property type="method" value="NMR"/>
    <property type="chains" value="A=573-683"/>
</dbReference>
<dbReference type="PDB" id="6EPK">
    <property type="method" value="X-ray"/>
    <property type="resolution" value="2.70 A"/>
    <property type="chains" value="A/D=286-677, B/E=122-210"/>
</dbReference>
<dbReference type="PDB" id="8OFN">
    <property type="method" value="X-ray"/>
    <property type="resolution" value="3.48 A"/>
    <property type="chains" value="A/B=286-678"/>
</dbReference>
<dbReference type="PDBsum" id="2JQM"/>
<dbReference type="PDBsum" id="2JV6"/>
<dbReference type="PDBsum" id="6EPK"/>
<dbReference type="PDBsum" id="8OFN"/>
<dbReference type="BMRB" id="Q6DV88"/>
<dbReference type="SMR" id="Q6DV88"/>
<dbReference type="MEROPS" id="S07.001"/>
<dbReference type="EvolutionaryTrace" id="Q6DV88"/>
<dbReference type="Proteomes" id="UP000008603">
    <property type="component" value="Genome"/>
</dbReference>
<dbReference type="Proteomes" id="UP000174416">
    <property type="component" value="Genome"/>
</dbReference>
<dbReference type="GO" id="GO:0005576">
    <property type="term" value="C:extracellular region"/>
    <property type="evidence" value="ECO:0007669"/>
    <property type="project" value="UniProtKB-SubCell"/>
</dbReference>
<dbReference type="GO" id="GO:0044167">
    <property type="term" value="C:host cell endoplasmic reticulum membrane"/>
    <property type="evidence" value="ECO:0007669"/>
    <property type="project" value="UniProtKB-SubCell"/>
</dbReference>
<dbReference type="GO" id="GO:0042025">
    <property type="term" value="C:host cell nucleus"/>
    <property type="evidence" value="ECO:0007669"/>
    <property type="project" value="UniProtKB-SubCell"/>
</dbReference>
<dbReference type="GO" id="GO:0044220">
    <property type="term" value="C:host cell perinuclear region of cytoplasm"/>
    <property type="evidence" value="ECO:0007669"/>
    <property type="project" value="UniProtKB-SubCell"/>
</dbReference>
<dbReference type="GO" id="GO:0016020">
    <property type="term" value="C:membrane"/>
    <property type="evidence" value="ECO:0007669"/>
    <property type="project" value="UniProtKB-KW"/>
</dbReference>
<dbReference type="GO" id="GO:0019028">
    <property type="term" value="C:viral capsid"/>
    <property type="evidence" value="ECO:0007669"/>
    <property type="project" value="UniProtKB-KW"/>
</dbReference>
<dbReference type="GO" id="GO:0019031">
    <property type="term" value="C:viral envelope"/>
    <property type="evidence" value="ECO:0007669"/>
    <property type="project" value="UniProtKB-KW"/>
</dbReference>
<dbReference type="GO" id="GO:0055036">
    <property type="term" value="C:virion membrane"/>
    <property type="evidence" value="ECO:0007669"/>
    <property type="project" value="UniProtKB-SubCell"/>
</dbReference>
<dbReference type="GO" id="GO:0005524">
    <property type="term" value="F:ATP binding"/>
    <property type="evidence" value="ECO:0007669"/>
    <property type="project" value="UniProtKB-KW"/>
</dbReference>
<dbReference type="GO" id="GO:0016887">
    <property type="term" value="F:ATP hydrolysis activity"/>
    <property type="evidence" value="ECO:0007669"/>
    <property type="project" value="RHEA"/>
</dbReference>
<dbReference type="GO" id="GO:0003725">
    <property type="term" value="F:double-stranded RNA binding"/>
    <property type="evidence" value="ECO:0007669"/>
    <property type="project" value="InterPro"/>
</dbReference>
<dbReference type="GO" id="GO:0005525">
    <property type="term" value="F:GTP binding"/>
    <property type="evidence" value="ECO:0007669"/>
    <property type="project" value="UniProtKB-KW"/>
</dbReference>
<dbReference type="GO" id="GO:0046872">
    <property type="term" value="F:metal ion binding"/>
    <property type="evidence" value="ECO:0007669"/>
    <property type="project" value="UniProtKB-KW"/>
</dbReference>
<dbReference type="GO" id="GO:0004483">
    <property type="term" value="F:mRNA (nucleoside-2'-O-)-methyltransferase activity"/>
    <property type="evidence" value="ECO:0007669"/>
    <property type="project" value="UniProtKB-EC"/>
</dbReference>
<dbReference type="GO" id="GO:0004482">
    <property type="term" value="F:mRNA 5'-cap (guanine-N7-)-methyltransferase activity"/>
    <property type="evidence" value="ECO:0007669"/>
    <property type="project" value="UniProtKB-EC"/>
</dbReference>
<dbReference type="GO" id="GO:0046983">
    <property type="term" value="F:protein dimerization activity"/>
    <property type="evidence" value="ECO:0007669"/>
    <property type="project" value="InterPro"/>
</dbReference>
<dbReference type="GO" id="GO:0003724">
    <property type="term" value="F:RNA helicase activity"/>
    <property type="evidence" value="ECO:0007669"/>
    <property type="project" value="UniProtKB-EC"/>
</dbReference>
<dbReference type="GO" id="GO:0003968">
    <property type="term" value="F:RNA-directed RNA polymerase activity"/>
    <property type="evidence" value="ECO:0007669"/>
    <property type="project" value="UniProtKB-KW"/>
</dbReference>
<dbReference type="GO" id="GO:0004252">
    <property type="term" value="F:serine-type endopeptidase activity"/>
    <property type="evidence" value="ECO:0007669"/>
    <property type="project" value="InterPro"/>
</dbReference>
<dbReference type="GO" id="GO:0005198">
    <property type="term" value="F:structural molecule activity"/>
    <property type="evidence" value="ECO:0007669"/>
    <property type="project" value="InterPro"/>
</dbReference>
<dbReference type="GO" id="GO:0075512">
    <property type="term" value="P:clathrin-dependent endocytosis of virus by host cell"/>
    <property type="evidence" value="ECO:0007669"/>
    <property type="project" value="UniProtKB-KW"/>
</dbReference>
<dbReference type="GO" id="GO:0039654">
    <property type="term" value="P:fusion of virus membrane with host endosome membrane"/>
    <property type="evidence" value="ECO:0007669"/>
    <property type="project" value="UniProtKB-KW"/>
</dbReference>
<dbReference type="GO" id="GO:0006508">
    <property type="term" value="P:proteolysis"/>
    <property type="evidence" value="ECO:0007669"/>
    <property type="project" value="UniProtKB-KW"/>
</dbReference>
<dbReference type="GO" id="GO:0039520">
    <property type="term" value="P:symbiont-mediated activation of host autophagy"/>
    <property type="evidence" value="ECO:0007669"/>
    <property type="project" value="UniProtKB-KW"/>
</dbReference>
<dbReference type="GO" id="GO:0052170">
    <property type="term" value="P:symbiont-mediated suppression of host innate immune response"/>
    <property type="evidence" value="ECO:0007669"/>
    <property type="project" value="UniProtKB-KW"/>
</dbReference>
<dbReference type="GO" id="GO:0039564">
    <property type="term" value="P:symbiont-mediated suppression of host JAK-STAT cascade via inhibition of STAT2 activity"/>
    <property type="evidence" value="ECO:0007669"/>
    <property type="project" value="UniProtKB-KW"/>
</dbReference>
<dbReference type="GO" id="GO:0039502">
    <property type="term" value="P:symbiont-mediated suppression of host type I interferon-mediated signaling pathway"/>
    <property type="evidence" value="ECO:0007669"/>
    <property type="project" value="UniProtKB-KW"/>
</dbReference>
<dbReference type="GO" id="GO:0039694">
    <property type="term" value="P:viral RNA genome replication"/>
    <property type="evidence" value="ECO:0007669"/>
    <property type="project" value="InterPro"/>
</dbReference>
<dbReference type="GO" id="GO:0019062">
    <property type="term" value="P:virion attachment to host cell"/>
    <property type="evidence" value="ECO:0007669"/>
    <property type="project" value="UniProtKB-KW"/>
</dbReference>
<dbReference type="CDD" id="cd20761">
    <property type="entry name" value="capping_2-OMTase_Flaviviridae"/>
    <property type="match status" value="1"/>
</dbReference>
<dbReference type="CDD" id="cd17931">
    <property type="entry name" value="DEXHc_viral_Ns3"/>
    <property type="match status" value="1"/>
</dbReference>
<dbReference type="CDD" id="cd12149">
    <property type="entry name" value="Flavi_E_C"/>
    <property type="match status" value="1"/>
</dbReference>
<dbReference type="CDD" id="cd17038">
    <property type="entry name" value="Flavi_M"/>
    <property type="match status" value="1"/>
</dbReference>
<dbReference type="CDD" id="cd23204">
    <property type="entry name" value="Flavivirus_RdRp"/>
    <property type="match status" value="1"/>
</dbReference>
<dbReference type="FunFam" id="1.20.1280.260:FF:000001">
    <property type="entry name" value="Envelope glycoprotein"/>
    <property type="match status" value="1"/>
</dbReference>
<dbReference type="FunFam" id="1.10.260.90:FF:000001">
    <property type="entry name" value="Genome polyprotein"/>
    <property type="match status" value="1"/>
</dbReference>
<dbReference type="FunFam" id="2.40.10.120:FF:000006">
    <property type="entry name" value="Genome polyprotein"/>
    <property type="match status" value="1"/>
</dbReference>
<dbReference type="FunFam" id="2.60.260.50:FF:000001">
    <property type="entry name" value="Genome polyprotein"/>
    <property type="match status" value="1"/>
</dbReference>
<dbReference type="FunFam" id="3.30.70.2840:FF:000001">
    <property type="entry name" value="Genome polyprotein"/>
    <property type="match status" value="1"/>
</dbReference>
<dbReference type="FunFam" id="3.30.70.2840:FF:000002">
    <property type="entry name" value="Genome polyprotein"/>
    <property type="match status" value="1"/>
</dbReference>
<dbReference type="FunFam" id="3.40.50.150:FF:000105">
    <property type="entry name" value="Genome polyprotein"/>
    <property type="match status" value="1"/>
</dbReference>
<dbReference type="FunFam" id="3.40.50.300:FF:000763">
    <property type="entry name" value="Genome polyprotein"/>
    <property type="match status" value="1"/>
</dbReference>
<dbReference type="Gene3D" id="1.10.10.930">
    <property type="match status" value="1"/>
</dbReference>
<dbReference type="Gene3D" id="1.10.260.90">
    <property type="match status" value="1"/>
</dbReference>
<dbReference type="Gene3D" id="1.20.1280.260">
    <property type="match status" value="1"/>
</dbReference>
<dbReference type="Gene3D" id="2.40.10.120">
    <property type="match status" value="2"/>
</dbReference>
<dbReference type="Gene3D" id="2.60.40.350">
    <property type="match status" value="1"/>
</dbReference>
<dbReference type="Gene3D" id="1.10.8.970">
    <property type="entry name" value="Flavivirus envelope glycoprotein M-like"/>
    <property type="match status" value="1"/>
</dbReference>
<dbReference type="Gene3D" id="2.60.260.50">
    <property type="entry name" value="Flavivirus polyprotein propeptide domain"/>
    <property type="match status" value="1"/>
</dbReference>
<dbReference type="Gene3D" id="3.30.70.2840">
    <property type="entry name" value="Flavivirus RNA-directed RNA polymerase, thumb domain"/>
    <property type="match status" value="3"/>
</dbReference>
<dbReference type="Gene3D" id="3.40.50.300">
    <property type="entry name" value="P-loop containing nucleotide triphosphate hydrolases"/>
    <property type="match status" value="2"/>
</dbReference>
<dbReference type="Gene3D" id="2.60.98.10">
    <property type="entry name" value="Tick-borne Encephalitis virus Glycoprotein, domain 1"/>
    <property type="match status" value="1"/>
</dbReference>
<dbReference type="Gene3D" id="3.40.50.150">
    <property type="entry name" value="Vaccinia Virus protein VP39"/>
    <property type="match status" value="1"/>
</dbReference>
<dbReference type="Gene3D" id="3.30.67.10">
    <property type="entry name" value="Viral Envelope Glycoprotein, domain 2"/>
    <property type="match status" value="1"/>
</dbReference>
<dbReference type="Gene3D" id="3.30.387.10">
    <property type="entry name" value="Viral Envelope Glycoprotein, domain 3"/>
    <property type="match status" value="1"/>
</dbReference>
<dbReference type="InterPro" id="IPR043502">
    <property type="entry name" value="DNA/RNA_pol_sf"/>
</dbReference>
<dbReference type="InterPro" id="IPR000069">
    <property type="entry name" value="Env_glycoprot_M_flavivir"/>
</dbReference>
<dbReference type="InterPro" id="IPR038302">
    <property type="entry name" value="Env_glycoprot_M_sf_flavivir"/>
</dbReference>
<dbReference type="InterPro" id="IPR013755">
    <property type="entry name" value="Flav_gly_cen_dom_subdom1"/>
</dbReference>
<dbReference type="InterPro" id="IPR001122">
    <property type="entry name" value="Flavi_capsidC"/>
</dbReference>
<dbReference type="InterPro" id="IPR037172">
    <property type="entry name" value="Flavi_capsidC_sf"/>
</dbReference>
<dbReference type="InterPro" id="IPR011492">
    <property type="entry name" value="Flavi_DEAD"/>
</dbReference>
<dbReference type="InterPro" id="IPR027287">
    <property type="entry name" value="Flavi_E_Ig-like"/>
</dbReference>
<dbReference type="InterPro" id="IPR026470">
    <property type="entry name" value="Flavi_E_Stem/Anchor_dom"/>
</dbReference>
<dbReference type="InterPro" id="IPR038345">
    <property type="entry name" value="Flavi_E_Stem/Anchor_dom_sf"/>
</dbReference>
<dbReference type="InterPro" id="IPR011998">
    <property type="entry name" value="Flavi_Glycoprot_E_cen/dimer"/>
</dbReference>
<dbReference type="InterPro" id="IPR001157">
    <property type="entry name" value="Flavi_NS1"/>
</dbReference>
<dbReference type="InterPro" id="IPR000752">
    <property type="entry name" value="Flavi_NS2A"/>
</dbReference>
<dbReference type="InterPro" id="IPR000487">
    <property type="entry name" value="Flavi_NS2B"/>
</dbReference>
<dbReference type="InterPro" id="IPR001850">
    <property type="entry name" value="Flavi_NS3_S7"/>
</dbReference>
<dbReference type="InterPro" id="IPR000404">
    <property type="entry name" value="Flavi_NS4A"/>
</dbReference>
<dbReference type="InterPro" id="IPR001528">
    <property type="entry name" value="Flavi_NS4B"/>
</dbReference>
<dbReference type="InterPro" id="IPR046811">
    <property type="entry name" value="Flavi_NS5_thumb"/>
</dbReference>
<dbReference type="InterPro" id="IPR002535">
    <property type="entry name" value="Flavi_propep"/>
</dbReference>
<dbReference type="InterPro" id="IPR038688">
    <property type="entry name" value="Flavi_propep_sf"/>
</dbReference>
<dbReference type="InterPro" id="IPR047530">
    <property type="entry name" value="Flavi_RdRp"/>
</dbReference>
<dbReference type="InterPro" id="IPR000208">
    <property type="entry name" value="Flavi_RdRp_fingers/palm"/>
</dbReference>
<dbReference type="InterPro" id="IPR000336">
    <property type="entry name" value="Flavivir/Alphavir_Ig-like_sf"/>
</dbReference>
<dbReference type="InterPro" id="IPR014412">
    <property type="entry name" value="Gen_Poly_FLV"/>
</dbReference>
<dbReference type="InterPro" id="IPR036253">
    <property type="entry name" value="Glycoprot_cen/dimer_sf"/>
</dbReference>
<dbReference type="InterPro" id="IPR038055">
    <property type="entry name" value="Glycoprot_E_dimer_dom"/>
</dbReference>
<dbReference type="InterPro" id="IPR013756">
    <property type="entry name" value="GlyE_cen_dom_subdom2"/>
</dbReference>
<dbReference type="InterPro" id="IPR014001">
    <property type="entry name" value="Helicase_ATP-bd"/>
</dbReference>
<dbReference type="InterPro" id="IPR001650">
    <property type="entry name" value="Helicase_C-like"/>
</dbReference>
<dbReference type="InterPro" id="IPR014756">
    <property type="entry name" value="Ig_E-set"/>
</dbReference>
<dbReference type="InterPro" id="IPR026490">
    <property type="entry name" value="mRNA_cap_0/1_MeTrfase"/>
</dbReference>
<dbReference type="InterPro" id="IPR049486">
    <property type="entry name" value="NS3-hel_C_flaviviridae"/>
</dbReference>
<dbReference type="InterPro" id="IPR027417">
    <property type="entry name" value="P-loop_NTPase"/>
</dbReference>
<dbReference type="InterPro" id="IPR009003">
    <property type="entry name" value="Peptidase_S1_PA"/>
</dbReference>
<dbReference type="InterPro" id="IPR007094">
    <property type="entry name" value="RNA-dir_pol_PSvirus"/>
</dbReference>
<dbReference type="InterPro" id="IPR002877">
    <property type="entry name" value="RNA_MeTrfase_FtsJ_dom"/>
</dbReference>
<dbReference type="InterPro" id="IPR029063">
    <property type="entry name" value="SAM-dependent_MTases_sf"/>
</dbReference>
<dbReference type="NCBIfam" id="TIGR04240">
    <property type="entry name" value="flavi_E_stem"/>
    <property type="match status" value="1"/>
</dbReference>
<dbReference type="Pfam" id="PF20907">
    <property type="entry name" value="Flav_NS3-hel_C"/>
    <property type="match status" value="1"/>
</dbReference>
<dbReference type="Pfam" id="PF01003">
    <property type="entry name" value="Flavi_capsid"/>
    <property type="match status" value="1"/>
</dbReference>
<dbReference type="Pfam" id="PF07652">
    <property type="entry name" value="Flavi_DEAD"/>
    <property type="match status" value="1"/>
</dbReference>
<dbReference type="Pfam" id="PF21659">
    <property type="entry name" value="Flavi_E_stem"/>
    <property type="match status" value="1"/>
</dbReference>
<dbReference type="Pfam" id="PF02832">
    <property type="entry name" value="Flavi_glycop_C"/>
    <property type="match status" value="1"/>
</dbReference>
<dbReference type="Pfam" id="PF00869">
    <property type="entry name" value="Flavi_glycoprot"/>
    <property type="match status" value="1"/>
</dbReference>
<dbReference type="Pfam" id="PF01004">
    <property type="entry name" value="Flavi_M"/>
    <property type="match status" value="1"/>
</dbReference>
<dbReference type="Pfam" id="PF00948">
    <property type="entry name" value="Flavi_NS1"/>
    <property type="match status" value="1"/>
</dbReference>
<dbReference type="Pfam" id="PF01005">
    <property type="entry name" value="Flavi_NS2A"/>
    <property type="match status" value="1"/>
</dbReference>
<dbReference type="Pfam" id="PF01002">
    <property type="entry name" value="Flavi_NS2B"/>
    <property type="match status" value="1"/>
</dbReference>
<dbReference type="Pfam" id="PF01350">
    <property type="entry name" value="Flavi_NS4A"/>
    <property type="match status" value="1"/>
</dbReference>
<dbReference type="Pfam" id="PF01349">
    <property type="entry name" value="Flavi_NS4B"/>
    <property type="match status" value="1"/>
</dbReference>
<dbReference type="Pfam" id="PF00972">
    <property type="entry name" value="Flavi_NS5"/>
    <property type="match status" value="1"/>
</dbReference>
<dbReference type="Pfam" id="PF20483">
    <property type="entry name" value="Flavi_NS5_thumb"/>
    <property type="match status" value="1"/>
</dbReference>
<dbReference type="Pfam" id="PF01570">
    <property type="entry name" value="Flavi_propep"/>
    <property type="match status" value="1"/>
</dbReference>
<dbReference type="Pfam" id="PF01728">
    <property type="entry name" value="FtsJ"/>
    <property type="match status" value="1"/>
</dbReference>
<dbReference type="Pfam" id="PF00949">
    <property type="entry name" value="Peptidase_S7"/>
    <property type="match status" value="1"/>
</dbReference>
<dbReference type="PIRSF" id="PIRSF003817">
    <property type="entry name" value="Gen_Poly_FLV"/>
    <property type="match status" value="1"/>
</dbReference>
<dbReference type="SMART" id="SM00487">
    <property type="entry name" value="DEXDc"/>
    <property type="match status" value="1"/>
</dbReference>
<dbReference type="SMART" id="SM00490">
    <property type="entry name" value="HELICc"/>
    <property type="match status" value="1"/>
</dbReference>
<dbReference type="SUPFAM" id="SSF56672">
    <property type="entry name" value="DNA/RNA polymerases"/>
    <property type="match status" value="1"/>
</dbReference>
<dbReference type="SUPFAM" id="SSF81296">
    <property type="entry name" value="E set domains"/>
    <property type="match status" value="1"/>
</dbReference>
<dbReference type="SUPFAM" id="SSF52540">
    <property type="entry name" value="P-loop containing nucleoside triphosphate hydrolases"/>
    <property type="match status" value="2"/>
</dbReference>
<dbReference type="SUPFAM" id="SSF53335">
    <property type="entry name" value="S-adenosyl-L-methionine-dependent methyltransferases"/>
    <property type="match status" value="1"/>
</dbReference>
<dbReference type="SUPFAM" id="SSF50494">
    <property type="entry name" value="Trypsin-like serine proteases"/>
    <property type="match status" value="1"/>
</dbReference>
<dbReference type="SUPFAM" id="SSF56983">
    <property type="entry name" value="Viral glycoprotein, central and dimerisation domains"/>
    <property type="match status" value="1"/>
</dbReference>
<dbReference type="PROSITE" id="PS51527">
    <property type="entry name" value="FLAVIVIRUS_NS2B"/>
    <property type="match status" value="1"/>
</dbReference>
<dbReference type="PROSITE" id="PS51528">
    <property type="entry name" value="FLAVIVIRUS_NS3PRO"/>
    <property type="match status" value="1"/>
</dbReference>
<dbReference type="PROSITE" id="PS51192">
    <property type="entry name" value="HELICASE_ATP_BIND_1"/>
    <property type="match status" value="1"/>
</dbReference>
<dbReference type="PROSITE" id="PS51194">
    <property type="entry name" value="HELICASE_CTER"/>
    <property type="match status" value="1"/>
</dbReference>
<dbReference type="PROSITE" id="PS50507">
    <property type="entry name" value="RDRP_SSRNA_POS"/>
    <property type="match status" value="1"/>
</dbReference>
<dbReference type="PROSITE" id="PS51591">
    <property type="entry name" value="RNA_CAP01_NS5_MT"/>
    <property type="match status" value="1"/>
</dbReference>
<name>POLG_YEFVA</name>
<organismHost>
    <name type="scientific">Aedes aegypti</name>
    <name type="common">Yellowfever mosquito</name>
    <name type="synonym">Culex aegypti</name>
    <dbReference type="NCBI Taxonomy" id="7159"/>
</organismHost>
<organismHost>
    <name type="scientific">Aedes luteocephalus</name>
    <name type="common">Mosquito</name>
    <dbReference type="NCBI Taxonomy" id="299629"/>
</organismHost>
<organismHost>
    <name type="scientific">Aedes simpsoni</name>
    <dbReference type="NCBI Taxonomy" id="7161"/>
</organismHost>
<organismHost>
    <name type="scientific">Homo sapiens</name>
    <name type="common">Human</name>
    <dbReference type="NCBI Taxonomy" id="9606"/>
</organismHost>
<organismHost>
    <name type="scientific">Simiiformes</name>
    <dbReference type="NCBI Taxonomy" id="314293"/>
</organismHost>
<comment type="function">
    <molecule>Capsid protein C</molecule>
    <text evidence="6">Plays a role in virus budding by binding to the cell membrane and gathering the viral RNA into a nucleocapsid that forms the core of a mature virus particle. During virus entry, may induce genome penetration into the host cytoplasm after hemifusion induced by the surface proteins. Can migrate to the cell nucleus where it modulates host functions.</text>
</comment>
<comment type="function">
    <molecule>Capsid protein C</molecule>
    <text evidence="2">Inhibits RNA silencing by interfering with host Dicer.</text>
</comment>
<comment type="function">
    <molecule>Peptide pr</molecule>
    <text evidence="6">Prevents premature fusion activity of envelope proteins in trans-Golgi by binding to envelope protein E at pH6.0. After virion release in extracellular space, gets dissociated from E dimers.</text>
</comment>
<comment type="function">
    <molecule>Protein prM</molecule>
    <text evidence="6">Acts as a chaperone for envelope protein E during intracellular virion assembly by masking and inactivating envelope protein E fusion peptide. prM is the only viral peptide matured by host furin in the trans-Golgi network probably to avoid catastrophic activation of the viral fusion activity in acidic Golgi compartment prior to virion release. prM-E cleavage is inefficient, and many virions are only partially matured. These uncleaved prM would play a role in immune evasion.</text>
</comment>
<comment type="function">
    <molecule>Small envelope protein M</molecule>
    <text evidence="6">May play a role in virus budding. Exerts cytotoxic effects by activating a mitochondrial apoptotic pathway through M ectodomain. May display a viroporin activity.</text>
</comment>
<comment type="function">
    <molecule>Envelope protein E</molecule>
    <text evidence="6">Binds to host cell surface receptor and mediates fusion between viral and cellular membranes. Envelope protein is synthesized in the endoplasmic reticulum in the form of heterodimer with protein prM. They play a role in virion budding in the ER, and the newly formed immature particle is covered with 60 spikes composed of heterodimer between precursor prM and envelope protein E. The virion is transported to the Golgi apparatus where the low pH causes dissociation of PrM-E heterodimers and formation of E homodimers. prM-E cleavage is inefficient, and many virions are only partially matured. These uncleaved prM would play a role in immune evasion.</text>
</comment>
<comment type="function">
    <molecule>Non-structural protein 1</molecule>
    <text evidence="10">Involved in immune evasion, pathogenesis and viral replication. Once cleaved off the polyprotein, is targeted to three destinations: the viral replication cycle, the plasma membrane and the extracellular compartment. Essential for viral replication. Required for formation of the replication complex and recruitment of other non-structural proteins to the ER-derived membrane structures. Excreted as a hexameric lipoparticle that plays a role against host immune response. Antagonizing the complement function. Binds to the host macrophages and dendritic cells. Inhibits signal transduction originating from Toll-like receptor 3 (TLR3).</text>
</comment>
<comment type="function">
    <molecule>Non-structural protein 2A</molecule>
    <text evidence="6">Component of the viral RNA replication complex that functions in virion assembly and antagonizes the host immune response.</text>
</comment>
<comment type="function">
    <molecule>Serine protease subunit NS2B</molecule>
    <text evidence="6 14">Required cofactor for the serine protease function of NS3. May have membrane-destabilizing activity and form viroporins (By similarity).</text>
</comment>
<comment type="function">
    <molecule>Serine protease NS3</molecule>
    <text evidence="2 15">Displays three enzymatic activities: serine protease, NTPase and RNA helicase. NS3 serine protease, in association with NS2B, performs its autocleavage and cleaves the polyprotein at dibasic sites in the cytoplasm: C-prM, NS2A-NS2B, NS2B-NS3, NS3-NS4A, NS4A-2K and NS4B-NS5. NS3 RNA helicase binds RNA and unwinds dsRNA in the 3' to 5' direction. Also plays a role in virus assembly (By similarity).</text>
</comment>
<comment type="function">
    <molecule>Non-structural protein 4A</molecule>
    <text evidence="10">Regulates the ATPase activity of the NS3 helicase activity. NS4A allows NS3 helicase to conserve energy during unwinding.</text>
</comment>
<comment type="function">
    <molecule>Peptide 2k</molecule>
    <text evidence="6">Functions as a signal peptide for NS4B and is required for the interferon antagonism activity of the latter.</text>
</comment>
<comment type="function">
    <molecule>Non-structural protein 4B</molecule>
    <text evidence="10">Induces the formation of ER-derived membrane vesicles where the viral replication takes place. Inhibits interferon (IFN)-induced host STAT1 phosphorylation and nuclear translocation, thereby preventing the establishment of cellular antiviral state by blocking the IFN-alpha/beta pathway.</text>
</comment>
<comment type="function">
    <molecule>RNA-directed RNA polymerase NS5</molecule>
    <text evidence="2">Replicates the viral (+) and (-) RNA genome, and performs the capping of genomes in the cytoplasm. NS5 methylates viral RNA cap at guanine N-7 and ribose 2'-O positions (By similarity). Besides its role in RNA genome replication, also prevents the establishment of cellular antiviral state by blocking the interferon-alpha/beta (IFN-alpha/beta) signaling pathway. IFN-I induces binding of NS5 to host IFN-activated transcription factor STAT2, preventing its transcriptional activity. Host TRIM23 is the E3 ligase that interacts with and polyubiquitinates NS5 to promote its binding to STAT2 and trigger IFN-I signaling inhibition.</text>
</comment>
<comment type="catalytic activity">
    <reaction>
        <text>Selective hydrolysis of -Xaa-Xaa-|-Yaa- bonds in which each of the Xaa can be either Arg or Lys and Yaa can be either Ser or Ala.</text>
        <dbReference type="EC" id="3.4.21.91"/>
    </reaction>
</comment>
<comment type="catalytic activity">
    <reaction evidence="12">
        <text>RNA(n) + a ribonucleoside 5'-triphosphate = RNA(n+1) + diphosphate</text>
        <dbReference type="Rhea" id="RHEA:21248"/>
        <dbReference type="Rhea" id="RHEA-COMP:14527"/>
        <dbReference type="Rhea" id="RHEA-COMP:17342"/>
        <dbReference type="ChEBI" id="CHEBI:33019"/>
        <dbReference type="ChEBI" id="CHEBI:61557"/>
        <dbReference type="ChEBI" id="CHEBI:140395"/>
        <dbReference type="EC" id="2.7.7.48"/>
    </reaction>
</comment>
<comment type="catalytic activity">
    <reaction>
        <text>a ribonucleoside 5'-triphosphate + H2O = a ribonucleoside 5'-diphosphate + phosphate + H(+)</text>
        <dbReference type="Rhea" id="RHEA:23680"/>
        <dbReference type="ChEBI" id="CHEBI:15377"/>
        <dbReference type="ChEBI" id="CHEBI:15378"/>
        <dbReference type="ChEBI" id="CHEBI:43474"/>
        <dbReference type="ChEBI" id="CHEBI:57930"/>
        <dbReference type="ChEBI" id="CHEBI:61557"/>
        <dbReference type="EC" id="3.6.1.15"/>
    </reaction>
</comment>
<comment type="catalytic activity">
    <reaction>
        <text>ATP + H2O = ADP + phosphate + H(+)</text>
        <dbReference type="Rhea" id="RHEA:13065"/>
        <dbReference type="ChEBI" id="CHEBI:15377"/>
        <dbReference type="ChEBI" id="CHEBI:15378"/>
        <dbReference type="ChEBI" id="CHEBI:30616"/>
        <dbReference type="ChEBI" id="CHEBI:43474"/>
        <dbReference type="ChEBI" id="CHEBI:456216"/>
        <dbReference type="EC" id="3.6.4.13"/>
    </reaction>
</comment>
<comment type="catalytic activity">
    <reaction evidence="16">
        <text>a 5'-end (5'-triphosphoguanosine)-ribonucleoside in mRNA + S-adenosyl-L-methionine = a 5'-end (N(7)-methyl 5'-triphosphoguanosine)-ribonucleoside in mRNA + S-adenosyl-L-homocysteine</text>
        <dbReference type="Rhea" id="RHEA:67008"/>
        <dbReference type="Rhea" id="RHEA-COMP:17166"/>
        <dbReference type="Rhea" id="RHEA-COMP:17167"/>
        <dbReference type="ChEBI" id="CHEBI:57856"/>
        <dbReference type="ChEBI" id="CHEBI:59789"/>
        <dbReference type="ChEBI" id="CHEBI:156461"/>
        <dbReference type="ChEBI" id="CHEBI:167617"/>
        <dbReference type="EC" id="2.1.1.56"/>
    </reaction>
</comment>
<comment type="catalytic activity">
    <reaction evidence="16">
        <text>a 5'-end (N(7)-methyl 5'-triphosphoguanosine)-ribonucleoside in mRNA + S-adenosyl-L-methionine = a 5'-end (N(7)-methyl 5'-triphosphoguanosine)-(2'-O-methyl-ribonucleoside) in mRNA + S-adenosyl-L-homocysteine + H(+)</text>
        <dbReference type="Rhea" id="RHEA:67020"/>
        <dbReference type="Rhea" id="RHEA-COMP:17167"/>
        <dbReference type="Rhea" id="RHEA-COMP:17168"/>
        <dbReference type="ChEBI" id="CHEBI:15378"/>
        <dbReference type="ChEBI" id="CHEBI:57856"/>
        <dbReference type="ChEBI" id="CHEBI:59789"/>
        <dbReference type="ChEBI" id="CHEBI:156461"/>
        <dbReference type="ChEBI" id="CHEBI:167609"/>
        <dbReference type="EC" id="2.1.1.57"/>
    </reaction>
</comment>
<comment type="subunit">
    <molecule>Capsid protein C</molecule>
    <text evidence="6">Homodimer (By similarity). Interacts (via N-terminus) with host EXOC1 (via C-terminus); this interaction results in EXOC1 degradation through the proteasome degradation pathway (By similarity).</text>
</comment>
<comment type="subunit">
    <molecule>Protein prM</molecule>
    <text evidence="6">Forms heterodimers with envelope protein E in the endoplasmic reticulum and Golgi.</text>
</comment>
<comment type="subunit">
    <molecule>Envelope protein E</molecule>
    <text evidence="6">Homodimer; in the endoplasmic reticulum and Golgi (By similarity). Interacts with protein prM (By similarity). Interacts with non-structural protein 1 (By similarity).</text>
</comment>
<comment type="subunit">
    <molecule>Non-structural protein 1</molecule>
    <text evidence="10">Homodimer; Homohexamer when secreted (By similarity). Interacts with envelope protein E (By similarity). NS1 interacts with NS4B (By similarity). Interacts with host complement protein CFH; this interaction leads to the degradation of C3 (By similarity).</text>
</comment>
<comment type="subunit">
    <molecule>Non-structural protein 2A</molecule>
    <text evidence="2">Interacts (via N-terminus) with serine protease NS3.</text>
</comment>
<comment type="subunit">
    <molecule>Serine protease subunit NS2B</molecule>
    <text evidence="6">Forms a heterodimer with serine protease NS3 (By similarity). May form homooligomers (By similarity).</text>
</comment>
<comment type="subunit">
    <molecule>Serine protease NS3</molecule>
    <text evidence="6">Forms a heterodimer with NS2B (By similarity). Interacts with non-structural protein 2A (via N-terminus) (By similarity). Interacts with NS4B (By similarity). Interacts with unphosphorylated RNA-directed RNA polymerase NS5; this interaction stimulates RNA-directed RNA polymerase NS5 guanylyltransferase activity (By similarity). NS3 interacts with host PDCD6IP; this interaction contributes to virion release (By similarity).</text>
</comment>
<comment type="subunit">
    <molecule>Non-structural protein 4B</molecule>
    <text evidence="6">Interacts with serine protease NS3 (By similarity).</text>
</comment>
<comment type="subunit">
    <molecule>RNA-directed RNA polymerase NS5</molecule>
    <text evidence="2">Homodimer (By similarity). Interacts with host STAT2; this interaction prevents the establishment of cellular antiviral state (By similarity). Interacts with serine protease NS3 (By similarity). Interacts with host TRIM23; this interaction leads to NS5 ubiquitination (By similarity).</text>
</comment>
<comment type="subcellular location">
    <molecule>Capsid protein C</molecule>
    <subcellularLocation>
        <location evidence="6">Virion</location>
    </subcellularLocation>
    <subcellularLocation>
        <location evidence="6">Host nucleus</location>
    </subcellularLocation>
    <subcellularLocation>
        <location evidence="6">Host cytoplasm</location>
        <location evidence="6">Host perinuclear region</location>
    </subcellularLocation>
    <subcellularLocation>
        <location evidence="6">Host cytoplasm</location>
    </subcellularLocation>
</comment>
<comment type="subcellular location">
    <molecule>Peptide pr</molecule>
    <subcellularLocation>
        <location evidence="6">Secreted</location>
    </subcellularLocation>
</comment>
<comment type="subcellular location">
    <molecule>Small envelope protein M</molecule>
    <subcellularLocation>
        <location evidence="2">Virion membrane</location>
        <topology evidence="2">Multi-pass membrane protein</topology>
    </subcellularLocation>
    <subcellularLocation>
        <location evidence="2">Host endoplasmic reticulum membrane</location>
        <topology evidence="11">Multi-pass membrane protein</topology>
    </subcellularLocation>
    <text evidence="2">ER membrane retention is mediated by the transmembrane domains.</text>
</comment>
<comment type="subcellular location">
    <molecule>Envelope protein E</molecule>
    <subcellularLocation>
        <location evidence="18">Virion membrane</location>
        <topology evidence="2">Multi-pass membrane protein</topology>
    </subcellularLocation>
    <subcellularLocation>
        <location evidence="2">Host endoplasmic reticulum membrane</location>
        <topology evidence="11">Multi-pass membrane protein</topology>
    </subcellularLocation>
    <text evidence="2">ER membrane retention is mediated by the transmembrane domains.</text>
</comment>
<comment type="subcellular location">
    <molecule>Non-structural protein 1</molecule>
    <subcellularLocation>
        <location evidence="6">Secreted</location>
    </subcellularLocation>
    <subcellularLocation>
        <location>Host endoplasmic reticulum membrane</location>
        <topology>Peripheral membrane protein</topology>
        <orientation evidence="6">Lumenal side</orientation>
    </subcellularLocation>
    <text evidence="10">Located in RE-derived vesicles hosting the replication complex.</text>
</comment>
<comment type="subcellular location">
    <molecule>Non-structural protein 2A</molecule>
    <subcellularLocation>
        <location evidence="6">Host endoplasmic reticulum membrane</location>
        <topology evidence="6">Multi-pass membrane protein</topology>
    </subcellularLocation>
</comment>
<comment type="subcellular location">
    <molecule>Serine protease subunit NS2B</molecule>
    <subcellularLocation>
        <location>Host endoplasmic reticulum membrane</location>
        <topology evidence="6">Multi-pass membrane protein</topology>
    </subcellularLocation>
</comment>
<comment type="subcellular location">
    <molecule>Serine protease NS3</molecule>
    <subcellularLocation>
        <location evidence="15">Host endoplasmic reticulum membrane</location>
        <topology evidence="15">Peripheral membrane protein</topology>
        <orientation evidence="15">Cytoplasmic side</orientation>
    </subcellularLocation>
    <text evidence="15">Remains non-covalently associated to serine protease subunit NS2B.</text>
</comment>
<comment type="subcellular location">
    <molecule>Non-structural protein 4A</molecule>
    <subcellularLocation>
        <location evidence="6">Host endoplasmic reticulum membrane</location>
        <topology evidence="6">Multi-pass membrane protein</topology>
    </subcellularLocation>
    <text evidence="6">Located in RE-associated vesicles hosting the replication complex.</text>
</comment>
<comment type="subcellular location">
    <molecule>Non-structural protein 4B</molecule>
    <subcellularLocation>
        <location evidence="6">Host endoplasmic reticulum membrane</location>
        <topology evidence="6">Multi-pass membrane protein</topology>
    </subcellularLocation>
    <text evidence="10">Located in RE-derived vesicles hosting the replication complex.</text>
</comment>
<comment type="subcellular location">
    <molecule>RNA-directed RNA polymerase NS5</molecule>
    <subcellularLocation>
        <location>Host endoplasmic reticulum membrane</location>
        <topology>Peripheral membrane protein</topology>
        <orientation>Cytoplasmic side</orientation>
    </subcellularLocation>
    <subcellularLocation>
        <location evidence="6">Host nucleus</location>
    </subcellularLocation>
    <text evidence="6">Located in RE-associated vesicles hosting the replication complex. NS5 protein is mainly localized in the nucleus rather than in ER vesicles.</text>
</comment>
<comment type="domain">
    <text evidence="6">The transmembrane domains of the small envelope protein M and envelope protein E contain an endoplasmic reticulum retention signal.</text>
</comment>
<comment type="PTM">
    <molecule>Genome polyprotein</molecule>
    <text evidence="2">Specific enzymatic cleavages in vivo yield mature proteins. The nascent capsid protein C contains a C-terminal hydrophobic domain that act as a signal sequence for translocation of prM into the lumen of the ER. Mature capsid protein C is cleaved at a site upstream of this hydrophobic domain by NS3. prM is cleaved in post-Golgi vesicles by a host furin, releasing the mature small envelope protein M, and peptide pr. Non-structural protein 2A-alpha, a C-terminally truncated form of non-structural protein 2A, results from partial cleavage by NS3. Specific enzymatic cleavages in vivo yield mature proteins peptide 2K acts as a signal sequence and is removed from the N-terminus of NS4B by the host signal peptidase in the ER lumen. Signal cleavage at the 2K-4B site requires a prior NS3 protease-mediated cleavage at the 4A-2K site.</text>
</comment>
<comment type="PTM">
    <molecule>Protein prM</molecule>
    <text evidence="6">Cleaved in post-Golgi vesicles by a host furin, releasing the mature small envelope protein M, and peptide pr. This cleavage is incomplete as up to 30% of viral particles still carry uncleaved prM.</text>
</comment>
<comment type="PTM">
    <molecule>Envelope protein E</molecule>
    <text evidence="6">N-glycosylated.</text>
</comment>
<comment type="PTM">
    <molecule>Non-structural protein 1</molecule>
    <text evidence="6">N-glycosylated. The excreted form is glycosylated and this is required for efficient secretion of the protein from infected cells.</text>
</comment>
<comment type="PTM">
    <text evidence="2">Polyubiquitinated; ubiquitination is probably mediated by host TRIM23 and is prerequisite for NS5-STAT2 interaction. NS5 is not ISGylated or sumoylated.</text>
</comment>
<comment type="PTM">
    <molecule>Serine protease NS3</molecule>
    <text evidence="8">Acetylated by host KAT5. Acetylation modulates NS3 RNA-binding and unwinding activities and plays an important positive role for viral replication.</text>
</comment>
<comment type="PTM">
    <molecule>RNA-directed RNA polymerase NS5</molecule>
    <text evidence="6">Phosphorylated on serines residues. This phosphorylation may trigger NS5 nuclear localization.</text>
</comment>
<comment type="similarity">
    <text evidence="16">In the N-terminal section; belongs to the class I-like SAM-binding methyltransferase superfamily. mRNA cap 0-1 NS5-type methyltransferase family.</text>
</comment>
<sequence length="3411" mass="379169">MSGRKAQGKTLGVNMVRRGVRSLSNKIKQKTKQIGNRPGPSRGVQGFIFFFLFNILTGKKITAHLKRLWKMLDPRQGLAVLRKVKRVVASLMRGLSSRKRRSHDVLTVQFLILGMLLMTGGVTLVRKNRWLLLNVTSEDLGKTFSVGTGNCTTNILEAKYWCPDSMEYNCPNLSPREEPDDIDCWCYGVENVRVAYGKCDSAGRSRRSRRAIDLPTHENHGLKTRQEKWMTGRMGERQLQKIERWLVRNPFFAVTALTIAYLVGSNMTQRVVIALLVLAVGPAYSAHCIGITDRDFIEGVHGGTWVSATLEQDKCVTVMAPDKPSLDISLETVAIDGPAEARKVCYNAVLTHVKINDKCPSTGEAHLAEENEGDNACKRTYSDRGWGNGCGLFGKGSIVACAKFTCAKSMSLFEVDQTKIQYVIRAQLHVGAKQENWNTDIKTLKFDALSGSQEAEFTGYGKATLECQVQTAVDFGNSYIAEMEKESWIVDRQWAQDLTLPWQSGSGGVWREMHHLVEFEPPHAATIRVLALGNQEGSLKTALTGAMRVTKDTNDNNLYKLHGGHVSCRVKLSALTLKGTSYKMCTDKMSFVKNPTDTGHGTVVMQVKVPKGAPCKIPVIVADDLTAAINKGILVTVNPIASTNDDEVLIEVNPPFGDSYIIVGTGDSRLTYQWHKEGSSIGKLFTQTMKGAERLAVMGDAAWDFSSAGGFFTSVGKGIHTVFGSAFQGLFGGLNWITKVIMGAVLIWVGINTRNMTMSMSMILVGVIMMFLSLGVGADQGCAINFGKRELKCGDGIFIFRDSDDWLNKYSYYPEDPVKLASIVKASFEEGKCGLNSVDSLEHEMWRSRADEINAILEENEVDISVVVQDPKNVYQRGTHPFSRIRDGLQYGWKTWGKNLVFSPGRKNGSFIIDGKSRKECPFSNRVWNSFQIEEFGTGVFTTRVYMDAVFEYTIDCDGSILGAAVNGKKSAHGSPTFWMGSHEVNGTWMIHTLEALDYKECEWPLTHTIGTSVEESEMFMPRSIGGPVSSHNHIPGYKVQTNGPWMQVPLEVKREACPGTSVIIDGNCDGRGKSTRSTTDSGKIIPEWCCRSCTMPPVSFHGSDGCWYPMEIRPRKTHESHLVRSWVTAGEIHAVPFGLVSMMIAMEVVLRKRQGPKQMLVGGVVLLGAMLVGQVTLLDLLKLTVAVGLHFHEMNNGGDAMYMALIAAFSIRPGLLIGFGLRTLWSPRERLVLTLGAAMVEIALGGMMGGLWKYLNAVSLCILTINAVASRKASNTILPLMALLTPVTMAEVRLATMLFCTVVIIGVLHQNSKDTSMQKTIPLVALTLTSYLGLTQPFLGLCAFLATRIFGRRSIPVNEALAAAGLVGVLAGLAFQEMENFLGPIAVGGILMMLVSVAGRVDGLELKKLGEVSWEEEAEISGSSARYDVALSEQGEFKLLSEEKVPWDQVVMTSLALVGAAIHPFALLLVLAGWLFHVRGARRSGDVLWDIPTPKIIEECEHLEDGIYGIFQSTFLGASQRGVGVAQGGVFHTMWHVTRGAFLVRNGKKLIPSWASVKEDLVAYGGSWKLEGRWDGEEEVQLIAAVPGKNVVNVQTKPSLFKVRNGGEIGAVALDYPSGTSGSPIVNRNGEVIGLYGNGILVGDNSFVSAISQTEVKEEGKEELQEIPTMLKKGMTTILDFHPGAGKTRRFLPQILAECARRRLRTLVLAPTRVVLSEMKEAFHGLDVKFHTQAFSAHGSGREVIDAMCHATLTYRMLEPTRVVNWEVIIMDEAHFLDPASIAARGWAAHRARANESATILMTATPPGTSDEFPHSNGEIEDVQTDIPSEPWNTGHDWILADKRPTAWFLPSIRAANVMAASLRKAGKSVVVLNRKTFEREYPTIKQKKPDFILATDIAEMGANLCVERVLDCRTAFKPVLVDEGRKVAIKGPLRISASSAAQRRGRIGRNPNRDGDSYYYSEPTSEDNAHHVCWLEASMLLDNMEVRGGMVAPLYGVEGTKTPVSPGEMRLRDDQRKVFRELVRNCDLPVWLSWQVAKAGLKTNDRKWCFEGPEEHEILNDSGETVKCRAPGGAKKPLRPRWCDERVSSDQSALSEFIKFAEGRRGAAEVLVVLSELPDFLAKKGGEAMDTISVFLHSEEGSRAYRNALSMMPEAMTIVMLFILAGLLTSGMVIFFMSPKGISRMSMAMGTMAGCGYLMFLGGVKPTHISYIMLIFFVLMVVVIPEPGQQRSIQDNQVAYLIIGILTLVSVVAANELGMLEKTKEDLFGKKNLIPSSASPWSWPDLDLKPGAAWTVYVGIVTMLSPMLHHWIKVEYGNLSLSGIAQSASVLSFMDKGIPFMKMNISVIILLVSGWNSITVMPLLCGIGCAMLHWSLILPGIKAQQSKLAQRRVFHGVAKNPVVDGNPTVDIEEAPEMPALYEKKLALYLLLALSLASVAMCRTPFSLAEGIVLASAALGPLIEGNTSLLWNGPMAVSMTGVMRGNYYAFVGVMYNLWKMKTGRRGSANGKTLGEVWKRELNLLDKQQFELYKRTDIVEVDRDTARRHLAEGKVDTGVAVSRGTAKLRWFHERGYVKLEGRVIDLGCGRGGWCYYAAAQKEVSGVKGFTLGRDGHEKPMNVQSLGWNIITFKDKTDIHRLEPVKCDTLLCDIGESSSSSVTEGERTVRVLDTVEKWLACGVDNFCVKVLAPYMPDVLEKLELLQRRFGGTVIRNPLSRNSTHEMYYVSGARSNVTFTVNQTSRLLMRRMRRPTGKVTLEADVILPIGTRSVETDKGPLDKEAIEERVERIKSEYMTSWFYDNDNPYRTWHYCGSYVTKTSGSAASMVNGVIKILTYPWDRIEEVTRMAMTDTTPFGQQRVFKEKVDTRAKDPPAGTRKIMKVVNRWLFRHLAREKNPRLCTKEEFIAKVRSHAAIGAYLEEQEQWKTANEAVQDPKFWELVDEERKLHQQGRCRTCVYNMMGKREKKLSEFGKAKGSRAIWYMWLGARYLEFEALGFLNEDHWASRENSGGGVEGIGLQYLGYVIRDLAAMDGGGFYADDTAGWDTRITEADLDDEQEILNYMSPHHKKLAQAVMEMTYKNKVVKVLRPAPGGKAYMDVISRRDQRGSGQVVTYALNTITNLKVQLIRMAEAEMVIHHQHVQDCDESVLTRLEAWLTEHGCNRLKRMAVSGDDCVVRPIDDRFGLALSHLNAMSKVRKDISEWQPSKGWNDWENVPFCSHHFHELQLKDGRRIVVPCREQDELIGRGRVSPGNGWMIKETACLSKAYANMWSLMYFHKRDMRLLSLAVSSAVPTSWVPQGRTTWSIHGKGEWMTTEDMLEVWNRVWITNNPHMQDKTMVKEWRDVPYLTKRQDKLCGSLIGMTNRATWASHIHLVIHRIRTLIGQEKYTDYLTVMDRYSVDADLQPGELI</sequence>
<proteinExistence type="evidence at protein level"/>
<reference key="1">
    <citation type="journal article" date="1995" name="J. Gen. Virol.">
        <title>Comparison of the genomes of the wild-type French viscerotropic strain of yellow fever virus with its vaccine derivative French neurotropic vaccine.</title>
        <authorList>
            <person name="Wang E."/>
            <person name="Ryman K.D."/>
            <person name="Jennings A.D."/>
            <person name="Wood D.J."/>
            <person name="Taffs F."/>
            <person name="Minor P.D."/>
            <person name="Sanders P.G."/>
            <person name="Barrett A.D."/>
        </authorList>
    </citation>
    <scope>NUCLEOTIDE SEQUENCE [GENOMIC RNA]</scope>
    <source>
        <strain>Isolate Senegal/French viscerotropic virus FVV/27</strain>
    </source>
</reference>
<reference key="2">
    <citation type="journal article" date="2005" name="J. Gen. Virol.">
        <title>Characterization of an infectious clone of the wild-type yellow fever virus Asibi strain that is able to infect and disseminate in mosquitoes.</title>
        <authorList>
            <person name="McElroy K.L."/>
            <person name="Tsetsarkin K.A."/>
            <person name="Vanlandingham D.L."/>
            <person name="Higgs S."/>
        </authorList>
    </citation>
    <scope>NUCLEOTIDE SEQUENCE [GENOMIC RNA]</scope>
</reference>
<reference key="3">
    <citation type="journal article" date="2009" name="Virology">
        <title>Structure of yellow fever virus envelope protein domain III.</title>
        <authorList>
            <person name="Volk D.E."/>
            <person name="May F.J."/>
            <person name="Gandham S.H."/>
            <person name="Anderson A."/>
            <person name="Von Lindern J.J."/>
            <person name="Beasley D.W."/>
            <person name="Barrett A.D."/>
            <person name="Gorenstein D.G."/>
        </authorList>
    </citation>
    <scope>STRUCTURE BY NMR OF 573-683</scope>
</reference>